<feature type="chain" id="PRO_1000206380" description="Putative nickel-responsive regulator">
    <location>
        <begin position="1"/>
        <end position="139"/>
    </location>
</feature>
<feature type="binding site" evidence="1">
    <location>
        <position position="79"/>
    </location>
    <ligand>
        <name>Ni(2+)</name>
        <dbReference type="ChEBI" id="CHEBI:49786"/>
    </ligand>
</feature>
<feature type="binding site" evidence="1">
    <location>
        <position position="90"/>
    </location>
    <ligand>
        <name>Ni(2+)</name>
        <dbReference type="ChEBI" id="CHEBI:49786"/>
    </ligand>
</feature>
<feature type="binding site" evidence="1">
    <location>
        <position position="92"/>
    </location>
    <ligand>
        <name>Ni(2+)</name>
        <dbReference type="ChEBI" id="CHEBI:49786"/>
    </ligand>
</feature>
<feature type="binding site" evidence="1">
    <location>
        <position position="98"/>
    </location>
    <ligand>
        <name>Ni(2+)</name>
        <dbReference type="ChEBI" id="CHEBI:49786"/>
    </ligand>
</feature>
<dbReference type="EMBL" id="CP001661">
    <property type="protein sequence ID" value="ACT19649.1"/>
    <property type="molecule type" value="Genomic_DNA"/>
</dbReference>
<dbReference type="SMR" id="C6E697"/>
<dbReference type="STRING" id="443144.GM21_3628"/>
<dbReference type="KEGG" id="gem:GM21_3628"/>
<dbReference type="eggNOG" id="COG0864">
    <property type="taxonomic scope" value="Bacteria"/>
</dbReference>
<dbReference type="HOGENOM" id="CLU_113319_1_2_7"/>
<dbReference type="OrthoDB" id="9806294at2"/>
<dbReference type="GO" id="GO:0003677">
    <property type="term" value="F:DNA binding"/>
    <property type="evidence" value="ECO:0007669"/>
    <property type="project" value="UniProtKB-KW"/>
</dbReference>
<dbReference type="GO" id="GO:0003700">
    <property type="term" value="F:DNA-binding transcription factor activity"/>
    <property type="evidence" value="ECO:0007669"/>
    <property type="project" value="UniProtKB-UniRule"/>
</dbReference>
<dbReference type="GO" id="GO:0016151">
    <property type="term" value="F:nickel cation binding"/>
    <property type="evidence" value="ECO:0007669"/>
    <property type="project" value="UniProtKB-UniRule"/>
</dbReference>
<dbReference type="GO" id="GO:0010045">
    <property type="term" value="P:response to nickel cation"/>
    <property type="evidence" value="ECO:0007669"/>
    <property type="project" value="InterPro"/>
</dbReference>
<dbReference type="CDD" id="cd22231">
    <property type="entry name" value="RHH_NikR_HicB-like"/>
    <property type="match status" value="1"/>
</dbReference>
<dbReference type="Gene3D" id="3.30.70.1150">
    <property type="entry name" value="ACT-like. Chain A, domain 2"/>
    <property type="match status" value="1"/>
</dbReference>
<dbReference type="Gene3D" id="1.10.1220.10">
    <property type="entry name" value="Met repressor-like"/>
    <property type="match status" value="1"/>
</dbReference>
<dbReference type="HAMAP" id="MF_00476">
    <property type="entry name" value="NikR"/>
    <property type="match status" value="1"/>
</dbReference>
<dbReference type="InterPro" id="IPR027271">
    <property type="entry name" value="Acetolactate_synth/TF_NikR_C"/>
</dbReference>
<dbReference type="InterPro" id="IPR045865">
    <property type="entry name" value="ACT-like_dom_sf"/>
</dbReference>
<dbReference type="InterPro" id="IPR013321">
    <property type="entry name" value="Arc_rbn_hlx_hlx"/>
</dbReference>
<dbReference type="InterPro" id="IPR002145">
    <property type="entry name" value="CopG"/>
</dbReference>
<dbReference type="InterPro" id="IPR050192">
    <property type="entry name" value="CopG/NikR_regulator"/>
</dbReference>
<dbReference type="InterPro" id="IPR022988">
    <property type="entry name" value="Ni_resp_reg_NikR"/>
</dbReference>
<dbReference type="InterPro" id="IPR010985">
    <property type="entry name" value="Ribbon_hlx_hlx"/>
</dbReference>
<dbReference type="InterPro" id="IPR014864">
    <property type="entry name" value="TF_NikR_Ni-bd_C"/>
</dbReference>
<dbReference type="NCBIfam" id="NF001884">
    <property type="entry name" value="PRK00630.1"/>
    <property type="match status" value="1"/>
</dbReference>
<dbReference type="NCBIfam" id="NF002169">
    <property type="entry name" value="PRK01002.1"/>
    <property type="match status" value="1"/>
</dbReference>
<dbReference type="NCBIfam" id="NF002815">
    <property type="entry name" value="PRK02967.1"/>
    <property type="match status" value="1"/>
</dbReference>
<dbReference type="NCBIfam" id="NF003381">
    <property type="entry name" value="PRK04460.1"/>
    <property type="match status" value="1"/>
</dbReference>
<dbReference type="PANTHER" id="PTHR34719">
    <property type="entry name" value="NICKEL-RESPONSIVE REGULATOR"/>
    <property type="match status" value="1"/>
</dbReference>
<dbReference type="PANTHER" id="PTHR34719:SF2">
    <property type="entry name" value="NICKEL-RESPONSIVE REGULATOR"/>
    <property type="match status" value="1"/>
</dbReference>
<dbReference type="Pfam" id="PF08753">
    <property type="entry name" value="NikR_C"/>
    <property type="match status" value="1"/>
</dbReference>
<dbReference type="Pfam" id="PF01402">
    <property type="entry name" value="RHH_1"/>
    <property type="match status" value="1"/>
</dbReference>
<dbReference type="SUPFAM" id="SSF55021">
    <property type="entry name" value="ACT-like"/>
    <property type="match status" value="1"/>
</dbReference>
<dbReference type="SUPFAM" id="SSF47598">
    <property type="entry name" value="Ribbon-helix-helix"/>
    <property type="match status" value="1"/>
</dbReference>
<evidence type="ECO:0000255" key="1">
    <source>
        <dbReference type="HAMAP-Rule" id="MF_00476"/>
    </source>
</evidence>
<comment type="function">
    <text evidence="1">Transcriptional regulator.</text>
</comment>
<comment type="cofactor">
    <cofactor evidence="1">
        <name>Ni(2+)</name>
        <dbReference type="ChEBI" id="CHEBI:49786"/>
    </cofactor>
    <text evidence="1">Binds 1 nickel ion per subunit.</text>
</comment>
<comment type="similarity">
    <text evidence="1">Belongs to the transcriptional regulatory CopG/NikR family.</text>
</comment>
<organism>
    <name type="scientific">Geobacter sp. (strain M21)</name>
    <dbReference type="NCBI Taxonomy" id="443144"/>
    <lineage>
        <taxon>Bacteria</taxon>
        <taxon>Pseudomonadati</taxon>
        <taxon>Thermodesulfobacteriota</taxon>
        <taxon>Desulfuromonadia</taxon>
        <taxon>Geobacterales</taxon>
        <taxon>Geobacteraceae</taxon>
        <taxon>Geobacter</taxon>
    </lineage>
</organism>
<name>NIKR_GEOSM</name>
<protein>
    <recommendedName>
        <fullName evidence="1">Putative nickel-responsive regulator</fullName>
    </recommendedName>
</protein>
<gene>
    <name type="ordered locus">GM21_3628</name>
</gene>
<keyword id="KW-0238">DNA-binding</keyword>
<keyword id="KW-0479">Metal-binding</keyword>
<keyword id="KW-0533">Nickel</keyword>
<keyword id="KW-0804">Transcription</keyword>
<keyword id="KW-0805">Transcription regulation</keyword>
<reference key="1">
    <citation type="submission" date="2009-07" db="EMBL/GenBank/DDBJ databases">
        <title>Complete sequence of Geobacter sp. M21.</title>
        <authorList>
            <consortium name="US DOE Joint Genome Institute"/>
            <person name="Lucas S."/>
            <person name="Copeland A."/>
            <person name="Lapidus A."/>
            <person name="Glavina del Rio T."/>
            <person name="Dalin E."/>
            <person name="Tice H."/>
            <person name="Bruce D."/>
            <person name="Goodwin L."/>
            <person name="Pitluck S."/>
            <person name="Saunders E."/>
            <person name="Brettin T."/>
            <person name="Detter J.C."/>
            <person name="Han C."/>
            <person name="Larimer F."/>
            <person name="Land M."/>
            <person name="Hauser L."/>
            <person name="Kyrpides N."/>
            <person name="Ovchinnikova G."/>
            <person name="Lovley D."/>
        </authorList>
    </citation>
    <scope>NUCLEOTIDE SEQUENCE [LARGE SCALE GENOMIC DNA]</scope>
    <source>
        <strain>M21</strain>
    </source>
</reference>
<proteinExistence type="inferred from homology"/>
<sequence length="139" mass="15666">MGETVRFGISMDDQLLESFDRLIEQKGYANRSEAIRDLIRAAQVELDWEEGEKEGVGTVTLVYNHHVRDLSDKLTEQQHAHHDQIISALHVHLDAHNCLEVLVVRGKARDVRRIADELIGVKGVKHGKLVMTTTGEGLH</sequence>
<accession>C6E697</accession>